<gene>
    <name evidence="1" type="primary">mnmA</name>
    <name type="ordered locus">Bfl392</name>
</gene>
<name>MNMA_BLOFL</name>
<accession>Q7U353</accession>
<reference key="1">
    <citation type="journal article" date="2003" name="Proc. Natl. Acad. Sci. U.S.A.">
        <title>The genome sequence of Blochmannia floridanus: comparative analysis of reduced genomes.</title>
        <authorList>
            <person name="Gil R."/>
            <person name="Silva F.J."/>
            <person name="Zientz E."/>
            <person name="Delmotte F."/>
            <person name="Gonzalez-Candelas F."/>
            <person name="Latorre A."/>
            <person name="Rausell C."/>
            <person name="Kamerbeek J."/>
            <person name="Gadau J."/>
            <person name="Hoelldobler B."/>
            <person name="van Ham R.C.H.J."/>
            <person name="Gross R."/>
            <person name="Moya A."/>
        </authorList>
    </citation>
    <scope>NUCLEOTIDE SEQUENCE [LARGE SCALE GENOMIC DNA]</scope>
</reference>
<evidence type="ECO:0000255" key="1">
    <source>
        <dbReference type="HAMAP-Rule" id="MF_00144"/>
    </source>
</evidence>
<feature type="chain" id="PRO_0000349538" description="tRNA-specific 2-thiouridylase MnmA">
    <location>
        <begin position="1"/>
        <end position="369"/>
    </location>
</feature>
<feature type="region of interest" description="Interaction with target base in tRNA" evidence="1">
    <location>
        <begin position="93"/>
        <end position="95"/>
    </location>
</feature>
<feature type="region of interest" description="Interaction with tRNA" evidence="1">
    <location>
        <begin position="145"/>
        <end position="147"/>
    </location>
</feature>
<feature type="region of interest" description="Interaction with tRNA" evidence="1">
    <location>
        <begin position="307"/>
        <end position="308"/>
    </location>
</feature>
<feature type="active site" description="Nucleophile" evidence="1">
    <location>
        <position position="98"/>
    </location>
</feature>
<feature type="active site" description="Cysteine persulfide intermediate" evidence="1">
    <location>
        <position position="195"/>
    </location>
</feature>
<feature type="binding site" evidence="1">
    <location>
        <begin position="7"/>
        <end position="14"/>
    </location>
    <ligand>
        <name>ATP</name>
        <dbReference type="ChEBI" id="CHEBI:30616"/>
    </ligand>
</feature>
<feature type="binding site" evidence="1">
    <location>
        <position position="33"/>
    </location>
    <ligand>
        <name>ATP</name>
        <dbReference type="ChEBI" id="CHEBI:30616"/>
    </ligand>
</feature>
<feature type="binding site" evidence="1">
    <location>
        <position position="123"/>
    </location>
    <ligand>
        <name>ATP</name>
        <dbReference type="ChEBI" id="CHEBI:30616"/>
    </ligand>
</feature>
<feature type="site" description="Interaction with tRNA" evidence="1">
    <location>
        <position position="124"/>
    </location>
</feature>
<feature type="site" description="Interaction with tRNA" evidence="1">
    <location>
        <position position="340"/>
    </location>
</feature>
<feature type="disulfide bond" description="Alternate" evidence="1">
    <location>
        <begin position="98"/>
        <end position="195"/>
    </location>
</feature>
<dbReference type="EC" id="2.8.1.13" evidence="1"/>
<dbReference type="EMBL" id="BX248583">
    <property type="protein sequence ID" value="CAD83458.1"/>
    <property type="molecule type" value="Genomic_DNA"/>
</dbReference>
<dbReference type="SMR" id="Q7U353"/>
<dbReference type="STRING" id="203907.Bfl392"/>
<dbReference type="KEGG" id="bfl:Bfl392"/>
<dbReference type="eggNOG" id="COG0482">
    <property type="taxonomic scope" value="Bacteria"/>
</dbReference>
<dbReference type="HOGENOM" id="CLU_035188_1_0_6"/>
<dbReference type="OrthoDB" id="9800696at2"/>
<dbReference type="Proteomes" id="UP000002192">
    <property type="component" value="Chromosome"/>
</dbReference>
<dbReference type="GO" id="GO:0005737">
    <property type="term" value="C:cytoplasm"/>
    <property type="evidence" value="ECO:0007669"/>
    <property type="project" value="UniProtKB-SubCell"/>
</dbReference>
<dbReference type="GO" id="GO:0005524">
    <property type="term" value="F:ATP binding"/>
    <property type="evidence" value="ECO:0007669"/>
    <property type="project" value="UniProtKB-KW"/>
</dbReference>
<dbReference type="GO" id="GO:0000049">
    <property type="term" value="F:tRNA binding"/>
    <property type="evidence" value="ECO:0007669"/>
    <property type="project" value="UniProtKB-KW"/>
</dbReference>
<dbReference type="GO" id="GO:0103016">
    <property type="term" value="F:tRNA-uridine 2-sulfurtransferase activity"/>
    <property type="evidence" value="ECO:0007669"/>
    <property type="project" value="UniProtKB-EC"/>
</dbReference>
<dbReference type="GO" id="GO:0002143">
    <property type="term" value="P:tRNA wobble position uridine thiolation"/>
    <property type="evidence" value="ECO:0007669"/>
    <property type="project" value="TreeGrafter"/>
</dbReference>
<dbReference type="CDD" id="cd01998">
    <property type="entry name" value="MnmA_TRMU-like"/>
    <property type="match status" value="1"/>
</dbReference>
<dbReference type="FunFam" id="2.30.30.280:FF:000001">
    <property type="entry name" value="tRNA-specific 2-thiouridylase MnmA"/>
    <property type="match status" value="1"/>
</dbReference>
<dbReference type="FunFam" id="2.40.30.10:FF:000023">
    <property type="entry name" value="tRNA-specific 2-thiouridylase MnmA"/>
    <property type="match status" value="1"/>
</dbReference>
<dbReference type="FunFam" id="3.40.50.620:FF:000004">
    <property type="entry name" value="tRNA-specific 2-thiouridylase MnmA"/>
    <property type="match status" value="1"/>
</dbReference>
<dbReference type="Gene3D" id="2.30.30.280">
    <property type="entry name" value="Adenine nucleotide alpha hydrolases-like domains"/>
    <property type="match status" value="1"/>
</dbReference>
<dbReference type="Gene3D" id="3.40.50.620">
    <property type="entry name" value="HUPs"/>
    <property type="match status" value="1"/>
</dbReference>
<dbReference type="Gene3D" id="2.40.30.10">
    <property type="entry name" value="Translation factors"/>
    <property type="match status" value="1"/>
</dbReference>
<dbReference type="HAMAP" id="MF_00144">
    <property type="entry name" value="tRNA_thiouridyl_MnmA"/>
    <property type="match status" value="1"/>
</dbReference>
<dbReference type="InterPro" id="IPR004506">
    <property type="entry name" value="MnmA-like"/>
</dbReference>
<dbReference type="InterPro" id="IPR046885">
    <property type="entry name" value="MnmA-like_C"/>
</dbReference>
<dbReference type="InterPro" id="IPR046884">
    <property type="entry name" value="MnmA-like_central"/>
</dbReference>
<dbReference type="InterPro" id="IPR023382">
    <property type="entry name" value="MnmA-like_central_sf"/>
</dbReference>
<dbReference type="InterPro" id="IPR014729">
    <property type="entry name" value="Rossmann-like_a/b/a_fold"/>
</dbReference>
<dbReference type="NCBIfam" id="NF001138">
    <property type="entry name" value="PRK00143.1"/>
    <property type="match status" value="1"/>
</dbReference>
<dbReference type="NCBIfam" id="TIGR00420">
    <property type="entry name" value="trmU"/>
    <property type="match status" value="1"/>
</dbReference>
<dbReference type="PANTHER" id="PTHR11933:SF5">
    <property type="entry name" value="MITOCHONDRIAL TRNA-SPECIFIC 2-THIOURIDYLASE 1"/>
    <property type="match status" value="1"/>
</dbReference>
<dbReference type="PANTHER" id="PTHR11933">
    <property type="entry name" value="TRNA 5-METHYLAMINOMETHYL-2-THIOURIDYLATE -METHYLTRANSFERASE"/>
    <property type="match status" value="1"/>
</dbReference>
<dbReference type="Pfam" id="PF03054">
    <property type="entry name" value="tRNA_Me_trans"/>
    <property type="match status" value="1"/>
</dbReference>
<dbReference type="Pfam" id="PF20258">
    <property type="entry name" value="tRNA_Me_trans_C"/>
    <property type="match status" value="1"/>
</dbReference>
<dbReference type="Pfam" id="PF20259">
    <property type="entry name" value="tRNA_Me_trans_M"/>
    <property type="match status" value="1"/>
</dbReference>
<dbReference type="SUPFAM" id="SSF52402">
    <property type="entry name" value="Adenine nucleotide alpha hydrolases-like"/>
    <property type="match status" value="1"/>
</dbReference>
<sequence>MKKVIVGISGGVDSSVAAWLLQQQGYLVEGLFMKNWENDDEKEYCSSEEDLSDAWSICNTLKIPLHTVNFAQEYWENVFQVFLQAYQSGFTPNPDVLCNKEIKFKHFLDFALEDLGADFIATGHYVRCMNVKKKITLMKGIDQNKDQSYFLYTLNQQQLKRCLFPIGSLTKLTVRKIAKELNLITANKKDSTGICFIGKRNFRSFLSNYIAIQPGDIINIHGNKLGLHQGIPFYTIGQRKGLNIGGISNGNGKPWYVVDKNITHNVLIVAQGINHPCLMSRIFIVQKIFWIKGNILKSPIQCSVKIRYQQSDVQCQIYPISVDTLKIILKQPVTAIAPGQSAVFYIKKHCIGGGTIIKRFPLIHIKNYY</sequence>
<organism>
    <name type="scientific">Blochmanniella floridana</name>
    <dbReference type="NCBI Taxonomy" id="203907"/>
    <lineage>
        <taxon>Bacteria</taxon>
        <taxon>Pseudomonadati</taxon>
        <taxon>Pseudomonadota</taxon>
        <taxon>Gammaproteobacteria</taxon>
        <taxon>Enterobacterales</taxon>
        <taxon>Enterobacteriaceae</taxon>
        <taxon>ant endosymbionts</taxon>
        <taxon>Candidatus Blochmanniella</taxon>
    </lineage>
</organism>
<comment type="function">
    <text evidence="1">Catalyzes the 2-thiolation of uridine at the wobble position (U34) of tRNA(Lys), tRNA(Glu) and tRNA(Gln), leading to the formation of s(2)U34, the first step of tRNA-mnm(5)s(2)U34 synthesis. Sulfur is provided by IscS, via a sulfur-relay system. Binds ATP and its substrate tRNAs.</text>
</comment>
<comment type="catalytic activity">
    <reaction evidence="1">
        <text>S-sulfanyl-L-cysteinyl-[protein] + uridine(34) in tRNA + AH2 + ATP = 2-thiouridine(34) in tRNA + L-cysteinyl-[protein] + A + AMP + diphosphate + H(+)</text>
        <dbReference type="Rhea" id="RHEA:47032"/>
        <dbReference type="Rhea" id="RHEA-COMP:10131"/>
        <dbReference type="Rhea" id="RHEA-COMP:11726"/>
        <dbReference type="Rhea" id="RHEA-COMP:11727"/>
        <dbReference type="Rhea" id="RHEA-COMP:11728"/>
        <dbReference type="ChEBI" id="CHEBI:13193"/>
        <dbReference type="ChEBI" id="CHEBI:15378"/>
        <dbReference type="ChEBI" id="CHEBI:17499"/>
        <dbReference type="ChEBI" id="CHEBI:29950"/>
        <dbReference type="ChEBI" id="CHEBI:30616"/>
        <dbReference type="ChEBI" id="CHEBI:33019"/>
        <dbReference type="ChEBI" id="CHEBI:61963"/>
        <dbReference type="ChEBI" id="CHEBI:65315"/>
        <dbReference type="ChEBI" id="CHEBI:87170"/>
        <dbReference type="ChEBI" id="CHEBI:456215"/>
        <dbReference type="EC" id="2.8.1.13"/>
    </reaction>
</comment>
<comment type="subunit">
    <text evidence="1">Interacts with TusE.</text>
</comment>
<comment type="subcellular location">
    <subcellularLocation>
        <location evidence="1">Cytoplasm</location>
    </subcellularLocation>
</comment>
<comment type="similarity">
    <text evidence="1">Belongs to the MnmA/TRMU family.</text>
</comment>
<keyword id="KW-0067">ATP-binding</keyword>
<keyword id="KW-0963">Cytoplasm</keyword>
<keyword id="KW-1015">Disulfide bond</keyword>
<keyword id="KW-0547">Nucleotide-binding</keyword>
<keyword id="KW-1185">Reference proteome</keyword>
<keyword id="KW-0694">RNA-binding</keyword>
<keyword id="KW-0808">Transferase</keyword>
<keyword id="KW-0819">tRNA processing</keyword>
<keyword id="KW-0820">tRNA-binding</keyword>
<protein>
    <recommendedName>
        <fullName evidence="1">tRNA-specific 2-thiouridylase MnmA</fullName>
        <ecNumber evidence="1">2.8.1.13</ecNumber>
    </recommendedName>
</protein>
<proteinExistence type="inferred from homology"/>